<evidence type="ECO:0000255" key="1">
    <source>
        <dbReference type="HAMAP-Rule" id="MF_01567"/>
    </source>
</evidence>
<accession>P0DH20</accession>
<accession>Q878W0</accession>
<accession>Q8K724</accession>
<proteinExistence type="inferred from homology"/>
<sequence>MKTIAFDSNKYLNLQRDHILERISQFDGKLYMEFGGKMLEDYHAARVLPGYEPDNKIKLLKELKEQVEIVIAINANNIEHSKARGDLGISYDQEVFRLIDKFNTLDIYVGSVVITQYNNQPAADAFRKQLEKNGIASYLHYPIKGYPTDINHIISSEGMGKNDYIKTSRNLIVVTAPGPGSGKLATCMSQMYHDQINGVKSGYAKFETFPVWNLPLHHPVNLAYEAATADLDDVNMIDPFHLETYGKTAVNYNRDIEVFPVLNRTFERILSKSPYASPTDMGVNMVGFSIVNEEAAIEASKQEIIRRYYQTLVDFKAERVTESAVKKIELLMNDIGVTPDDRHVTVAAHQKAEQTGQPALALQLPNGQIVTGKTSGLFGPTAAVIINAIKTLAKIDKTTHLIEPEYVKPIQGLKVNHLGSHNPRLHSNEILIALAITAMTSEEANLAMKELGNLKGSEAHSTVILTEEDKNVLRKLGVNITFDPVYQHHKLYRK</sequence>
<comment type="similarity">
    <text evidence="1">Belongs to the UPF0371 family.</text>
</comment>
<feature type="chain" id="PRO_0000245621" description="UPF0371 protein SpyM3_1021">
    <location>
        <begin position="1"/>
        <end position="494"/>
    </location>
</feature>
<name>Y1021_STRP3</name>
<organism>
    <name type="scientific">Streptococcus pyogenes serotype M3 (strain ATCC BAA-595 / MGAS315)</name>
    <dbReference type="NCBI Taxonomy" id="198466"/>
    <lineage>
        <taxon>Bacteria</taxon>
        <taxon>Bacillati</taxon>
        <taxon>Bacillota</taxon>
        <taxon>Bacilli</taxon>
        <taxon>Lactobacillales</taxon>
        <taxon>Streptococcaceae</taxon>
        <taxon>Streptococcus</taxon>
    </lineage>
</organism>
<dbReference type="EMBL" id="AE014074">
    <property type="protein sequence ID" value="AAM79628.1"/>
    <property type="molecule type" value="Genomic_DNA"/>
</dbReference>
<dbReference type="RefSeq" id="WP_011054624.1">
    <property type="nucleotide sequence ID" value="NC_004070.1"/>
</dbReference>
<dbReference type="SMR" id="P0DH20"/>
<dbReference type="KEGG" id="spg:SpyM3_1021"/>
<dbReference type="HOGENOM" id="CLU_046981_0_0_9"/>
<dbReference type="Proteomes" id="UP000000564">
    <property type="component" value="Chromosome"/>
</dbReference>
<dbReference type="Gene3D" id="1.20.1570.10">
    <property type="entry name" value="dip2346 domain like"/>
    <property type="match status" value="1"/>
</dbReference>
<dbReference type="Gene3D" id="3.10.630.10">
    <property type="entry name" value="dip2346 domain like"/>
    <property type="match status" value="1"/>
</dbReference>
<dbReference type="Gene3D" id="3.40.140.40">
    <property type="entry name" value="Domain of unknown function (DUF1846), C-terminal subdomain"/>
    <property type="match status" value="1"/>
</dbReference>
<dbReference type="HAMAP" id="MF_01567">
    <property type="entry name" value="UPF0371"/>
    <property type="match status" value="1"/>
</dbReference>
<dbReference type="InterPro" id="IPR014999">
    <property type="entry name" value="DUF1846"/>
</dbReference>
<dbReference type="InterPro" id="IPR048441">
    <property type="entry name" value="DUF1846_C"/>
</dbReference>
<dbReference type="InterPro" id="IPR048496">
    <property type="entry name" value="DUF1846_N"/>
</dbReference>
<dbReference type="NCBIfam" id="NF010184">
    <property type="entry name" value="PRK13663.1"/>
    <property type="match status" value="1"/>
</dbReference>
<dbReference type="Pfam" id="PF08903">
    <property type="entry name" value="DUF1846"/>
    <property type="match status" value="1"/>
</dbReference>
<dbReference type="Pfam" id="PF20921">
    <property type="entry name" value="DUF1846_C"/>
    <property type="match status" value="1"/>
</dbReference>
<dbReference type="PIRSF" id="PIRSF033132">
    <property type="entry name" value="DUF1846"/>
    <property type="match status" value="1"/>
</dbReference>
<gene>
    <name type="ordered locus">SpyM3_1021</name>
</gene>
<protein>
    <recommendedName>
        <fullName evidence="1">UPF0371 protein SpyM3_1021</fullName>
    </recommendedName>
</protein>
<reference key="1">
    <citation type="journal article" date="2002" name="Proc. Natl. Acad. Sci. U.S.A.">
        <title>Genome sequence of a serotype M3 strain of group A Streptococcus: phage-encoded toxins, the high-virulence phenotype, and clone emergence.</title>
        <authorList>
            <person name="Beres S.B."/>
            <person name="Sylva G.L."/>
            <person name="Barbian K.D."/>
            <person name="Lei B."/>
            <person name="Hoff J.S."/>
            <person name="Mammarella N.D."/>
            <person name="Liu M.-Y."/>
            <person name="Smoot J.C."/>
            <person name="Porcella S.F."/>
            <person name="Parkins L.D."/>
            <person name="Campbell D.S."/>
            <person name="Smith T.M."/>
            <person name="McCormick J.K."/>
            <person name="Leung D.Y.M."/>
            <person name="Schlievert P.M."/>
            <person name="Musser J.M."/>
        </authorList>
    </citation>
    <scope>NUCLEOTIDE SEQUENCE [LARGE SCALE GENOMIC DNA]</scope>
    <source>
        <strain>ATCC BAA-595 / MGAS315</strain>
    </source>
</reference>